<accession>G5E8V9</accession>
<accession>A2RSX9</accession>
<accession>E9Q3G5</accession>
<gene>
    <name evidence="4" type="primary">Arfip1</name>
</gene>
<sequence length="373" mass="41518">MAQESPKNSAAEIPVTSNGEVDDAHEHGYNRDLKHSLPSGLGLSETQITSHGFDSTKEGVTEAGAPQGSSAPPLPCVLSPSRVAASKLTQQAGDLTVPAGGQRTHTKGGPVILADEIKNPAMEKLELVRKWSLNTYKCTRQIISEKLGRGSRTVDLELEAQIDILRDNKKKYENILKLAQTLSTQLFQMVHTQKQLGDAFADLSLKSLELHEEFGYNADTQKLLAKNGETLLGAINFFIASVNTLVNKTIEDTLMTVKQYENARVEYDAYRTDLEELNLGPRDANTLPKIEQSQHLFQIHKEKYDKMRSDVSVKLKFLEENKVKVLRNQLVLFHSAVAAYFAGNQKQLELTLKQFHVRLKTPGVDAPSWLEEQ</sequence>
<comment type="function">
    <text evidence="1">Plays a role in controlling biogenesis of secretory granules at the trans-Golgi network. Mechanistically, binds ARF-GTP at the neck of a growing secretory granule precursor and forms a protective scaffold. Once the granule precursor has been completely loaded, active PRKD1 phosphorylates ARFIP1 and releases it from ARFs. In turn, ARFs induce fission. Through this mechanism, ensures proper secretory granule formation at the Golgi of pancreatic beta cells.</text>
</comment>
<comment type="subunit">
    <text evidence="1">Forms homodimers or heterodimers with ARFIP2. Interacts with non-myristoylated GTP-bound ARF3, but not to GDP-bound ARF3. Interacts with ARF1. Binds with lower affinity to ARF5 and with very little affinity to ARF6. Interacts with ARL1. Interacts with ATG9A.</text>
</comment>
<comment type="subcellular location">
    <subcellularLocation>
        <location evidence="1">Golgi apparatus</location>
    </subcellularLocation>
    <subcellularLocation>
        <location evidence="1">Golgi apparatus</location>
        <location evidence="1">trans-Golgi network membrane</location>
    </subcellularLocation>
</comment>
<comment type="alternative products">
    <event type="alternative splicing"/>
    <isoform>
        <id>G5E8V9-1</id>
        <name>1</name>
        <sequence type="displayed"/>
    </isoform>
    <isoform>
        <id>G5E8V9-2</id>
        <name>2</name>
        <sequence type="described" ref="VSP_061208"/>
    </isoform>
    <isoform>
        <id>G5E8V9-3</id>
        <name>3</name>
        <sequence type="described" ref="VSP_061209"/>
    </isoform>
</comment>
<comment type="PTM">
    <text evidence="1">Phosphorylated by PRKD1; phosphorylation delocalizes ARFIP1 from the Golgi and disrupts its ability to inhibit the activity of ADP-ribosylation factor, an important component of the vesicle scission machinery.</text>
</comment>
<protein>
    <recommendedName>
        <fullName>Arfaptin-1</fullName>
    </recommendedName>
    <alternativeName>
        <fullName>ADP-ribosylation factor-interacting protein 1</fullName>
    </alternativeName>
</protein>
<dbReference type="EMBL" id="BC132291">
    <property type="protein sequence ID" value="AAI32292.1"/>
    <property type="molecule type" value="mRNA"/>
</dbReference>
<dbReference type="EMBL" id="BC144758">
    <property type="protein sequence ID" value="AAI44759.1"/>
    <property type="molecule type" value="mRNA"/>
</dbReference>
<dbReference type="CCDS" id="CCDS38466.1">
    <molecule id="G5E8V9-1"/>
</dbReference>
<dbReference type="CCDS" id="CCDS79931.1">
    <molecule id="G5E8V9-2"/>
</dbReference>
<dbReference type="RefSeq" id="NP_001074562.1">
    <molecule id="G5E8V9-1"/>
    <property type="nucleotide sequence ID" value="NM_001081093.2"/>
</dbReference>
<dbReference type="RefSeq" id="NP_001280730.1">
    <molecule id="G5E8V9-2"/>
    <property type="nucleotide sequence ID" value="NM_001293801.1"/>
</dbReference>
<dbReference type="RefSeq" id="XP_006502545.1">
    <molecule id="G5E8V9-1"/>
    <property type="nucleotide sequence ID" value="XM_006502482.4"/>
</dbReference>
<dbReference type="RefSeq" id="XP_036019376.1">
    <molecule id="G5E8V9-2"/>
    <property type="nucleotide sequence ID" value="XM_036163483.1"/>
</dbReference>
<dbReference type="SMR" id="G5E8V9"/>
<dbReference type="FunCoup" id="G5E8V9">
    <property type="interactions" value="3634"/>
</dbReference>
<dbReference type="STRING" id="10090.ENSMUSP00000122964"/>
<dbReference type="iPTMnet" id="G5E8V9"/>
<dbReference type="PhosphoSitePlus" id="G5E8V9"/>
<dbReference type="jPOST" id="G5E8V9"/>
<dbReference type="PaxDb" id="10090-ENSMUSP00000122964"/>
<dbReference type="PeptideAtlas" id="G5E8V9"/>
<dbReference type="ProteomicsDB" id="330963"/>
<dbReference type="ProteomicsDB" id="337187"/>
<dbReference type="ProteomicsDB" id="366098"/>
<dbReference type="DNASU" id="99889"/>
<dbReference type="Ensembl" id="ENSMUST00000098990.10">
    <molecule id="G5E8V9-2"/>
    <property type="protein sequence ID" value="ENSMUSP00000096588.4"/>
    <property type="gene ID" value="ENSMUSG00000074513.10"/>
</dbReference>
<dbReference type="Ensembl" id="ENSMUST00000107687.9">
    <molecule id="G5E8V9-3"/>
    <property type="protein sequence ID" value="ENSMUSP00000103315.3"/>
    <property type="gene ID" value="ENSMUSG00000074513.10"/>
</dbReference>
<dbReference type="Ensembl" id="ENSMUST00000143514.3">
    <molecule id="G5E8V9-1"/>
    <property type="protein sequence ID" value="ENSMUSP00000122964.2"/>
    <property type="gene ID" value="ENSMUSG00000074513.10"/>
</dbReference>
<dbReference type="GeneID" id="99889"/>
<dbReference type="KEGG" id="mmu:99889"/>
<dbReference type="UCSC" id="uc008pqe.2">
    <molecule id="G5E8V9-1"/>
    <property type="organism name" value="mouse"/>
</dbReference>
<dbReference type="UCSC" id="uc008pqf.2">
    <property type="organism name" value="mouse"/>
</dbReference>
<dbReference type="AGR" id="MGI:1277120"/>
<dbReference type="CTD" id="27236"/>
<dbReference type="MGI" id="MGI:1277120">
    <property type="gene designation" value="Arfip1"/>
</dbReference>
<dbReference type="VEuPathDB" id="HostDB:ENSMUSG00000074513"/>
<dbReference type="eggNOG" id="KOG3876">
    <property type="taxonomic scope" value="Eukaryota"/>
</dbReference>
<dbReference type="GeneTree" id="ENSGT00950000183040"/>
<dbReference type="HOGENOM" id="CLU_047975_2_0_1"/>
<dbReference type="InParanoid" id="G5E8V9"/>
<dbReference type="OMA" id="HRRHYER"/>
<dbReference type="OrthoDB" id="9994780at2759"/>
<dbReference type="PhylomeDB" id="G5E8V9"/>
<dbReference type="TreeFam" id="TF314945"/>
<dbReference type="BioGRID-ORCS" id="99889">
    <property type="hits" value="0 hits in 76 CRISPR screens"/>
</dbReference>
<dbReference type="ChiTaRS" id="Arfip1">
    <property type="organism name" value="mouse"/>
</dbReference>
<dbReference type="PRO" id="PR:G5E8V9"/>
<dbReference type="Proteomes" id="UP000000589">
    <property type="component" value="Chromosome 3"/>
</dbReference>
<dbReference type="RNAct" id="G5E8V9">
    <property type="molecule type" value="protein"/>
</dbReference>
<dbReference type="Bgee" id="ENSMUSG00000074513">
    <property type="expression patterns" value="Expressed in secondary oocyte and 65 other cell types or tissues"/>
</dbReference>
<dbReference type="ExpressionAtlas" id="G5E8V9">
    <property type="expression patterns" value="baseline and differential"/>
</dbReference>
<dbReference type="GO" id="GO:0005829">
    <property type="term" value="C:cytosol"/>
    <property type="evidence" value="ECO:0000266"/>
    <property type="project" value="MGI"/>
</dbReference>
<dbReference type="GO" id="GO:0000139">
    <property type="term" value="C:Golgi membrane"/>
    <property type="evidence" value="ECO:0000266"/>
    <property type="project" value="MGI"/>
</dbReference>
<dbReference type="GO" id="GO:0032588">
    <property type="term" value="C:trans-Golgi network membrane"/>
    <property type="evidence" value="ECO:0007669"/>
    <property type="project" value="Ensembl"/>
</dbReference>
<dbReference type="GO" id="GO:0070273">
    <property type="term" value="F:phosphatidylinositol-4-phosphate binding"/>
    <property type="evidence" value="ECO:0007669"/>
    <property type="project" value="Ensembl"/>
</dbReference>
<dbReference type="GO" id="GO:0019904">
    <property type="term" value="F:protein domain specific binding"/>
    <property type="evidence" value="ECO:0007669"/>
    <property type="project" value="InterPro"/>
</dbReference>
<dbReference type="GO" id="GO:0006886">
    <property type="term" value="P:intracellular protein transport"/>
    <property type="evidence" value="ECO:0000266"/>
    <property type="project" value="MGI"/>
</dbReference>
<dbReference type="GO" id="GO:1905280">
    <property type="term" value="P:negative regulation of retrograde transport, endosome to Golgi"/>
    <property type="evidence" value="ECO:0007669"/>
    <property type="project" value="Ensembl"/>
</dbReference>
<dbReference type="GO" id="GO:0050708">
    <property type="term" value="P:regulation of protein secretion"/>
    <property type="evidence" value="ECO:0000266"/>
    <property type="project" value="MGI"/>
</dbReference>
<dbReference type="CDD" id="cd07660">
    <property type="entry name" value="BAR_Arfaptin"/>
    <property type="match status" value="1"/>
</dbReference>
<dbReference type="FunFam" id="1.20.1270.60:FF:000003">
    <property type="entry name" value="arfaptin-2 isoform X1"/>
    <property type="match status" value="1"/>
</dbReference>
<dbReference type="Gene3D" id="1.20.1270.60">
    <property type="entry name" value="Arfaptin homology (AH) domain/BAR domain"/>
    <property type="match status" value="1"/>
</dbReference>
<dbReference type="InterPro" id="IPR027267">
    <property type="entry name" value="AH/BAR_dom_sf"/>
</dbReference>
<dbReference type="InterPro" id="IPR010504">
    <property type="entry name" value="AH_dom"/>
</dbReference>
<dbReference type="InterPro" id="IPR030798">
    <property type="entry name" value="Arfaptin_fam"/>
</dbReference>
<dbReference type="PANTHER" id="PTHR12141:SF4">
    <property type="entry name" value="ARFAPTIN-1"/>
    <property type="match status" value="1"/>
</dbReference>
<dbReference type="PANTHER" id="PTHR12141">
    <property type="entry name" value="ARFAPTIN-RELATED"/>
    <property type="match status" value="1"/>
</dbReference>
<dbReference type="Pfam" id="PF06456">
    <property type="entry name" value="Arfaptin"/>
    <property type="match status" value="1"/>
</dbReference>
<dbReference type="SMART" id="SM01015">
    <property type="entry name" value="Arfaptin"/>
    <property type="match status" value="1"/>
</dbReference>
<dbReference type="SUPFAM" id="SSF103657">
    <property type="entry name" value="BAR/IMD domain-like"/>
    <property type="match status" value="1"/>
</dbReference>
<dbReference type="PROSITE" id="PS50870">
    <property type="entry name" value="AH"/>
    <property type="match status" value="1"/>
</dbReference>
<proteinExistence type="evidence at protein level"/>
<keyword id="KW-0007">Acetylation</keyword>
<keyword id="KW-0025">Alternative splicing</keyword>
<keyword id="KW-0333">Golgi apparatus</keyword>
<keyword id="KW-0472">Membrane</keyword>
<keyword id="KW-0597">Phosphoprotein</keyword>
<keyword id="KW-1185">Reference proteome</keyword>
<name>ARFP1_MOUSE</name>
<evidence type="ECO:0000250" key="1">
    <source>
        <dbReference type="UniProtKB" id="P53367"/>
    </source>
</evidence>
<evidence type="ECO:0000255" key="2">
    <source>
        <dbReference type="PROSITE-ProRule" id="PRU00294"/>
    </source>
</evidence>
<evidence type="ECO:0000256" key="3">
    <source>
        <dbReference type="SAM" id="MobiDB-lite"/>
    </source>
</evidence>
<evidence type="ECO:0000312" key="4">
    <source>
        <dbReference type="MGI" id="MGI:1277120"/>
    </source>
</evidence>
<evidence type="ECO:0007744" key="5">
    <source>
    </source>
</evidence>
<feature type="initiator methionine" description="Removed" evidence="1">
    <location>
        <position position="1"/>
    </location>
</feature>
<feature type="chain" id="PRO_0000453921" description="Arfaptin-1">
    <location>
        <begin position="2"/>
        <end position="373"/>
    </location>
</feature>
<feature type="domain" description="AH" evidence="2">
    <location>
        <begin position="153"/>
        <end position="353"/>
    </location>
</feature>
<feature type="region of interest" description="Disordered" evidence="3">
    <location>
        <begin position="1"/>
        <end position="47"/>
    </location>
</feature>
<feature type="compositionally biased region" description="Basic and acidic residues" evidence="3">
    <location>
        <begin position="22"/>
        <end position="35"/>
    </location>
</feature>
<feature type="modified residue" description="N-acetylalanine" evidence="1">
    <location>
        <position position="2"/>
    </location>
</feature>
<feature type="modified residue" description="Phosphoserine" evidence="1">
    <location>
        <position position="5"/>
    </location>
</feature>
<feature type="modified residue" description="Phosphoserine" evidence="1">
    <location>
        <position position="36"/>
    </location>
</feature>
<feature type="modified residue" description="Phosphoserine" evidence="1">
    <location>
        <position position="39"/>
    </location>
</feature>
<feature type="modified residue" description="Phosphoserine" evidence="1">
    <location>
        <position position="69"/>
    </location>
</feature>
<feature type="modified residue" description="Phosphoserine" evidence="1">
    <location>
        <position position="79"/>
    </location>
</feature>
<feature type="modified residue" description="Phosphoserine" evidence="1">
    <location>
        <position position="132"/>
    </location>
</feature>
<feature type="modified residue" description="Phosphothreonine" evidence="1">
    <location>
        <position position="361"/>
    </location>
</feature>
<feature type="splice variant" id="VSP_061208" description="In isoform 2.">
    <location>
        <begin position="68"/>
        <end position="99"/>
    </location>
</feature>
<feature type="splice variant" id="VSP_061209" description="In isoform 3.">
    <location>
        <begin position="92"/>
        <end position="98"/>
    </location>
</feature>
<organism>
    <name type="scientific">Mus musculus</name>
    <name type="common">Mouse</name>
    <dbReference type="NCBI Taxonomy" id="10090"/>
    <lineage>
        <taxon>Eukaryota</taxon>
        <taxon>Metazoa</taxon>
        <taxon>Chordata</taxon>
        <taxon>Craniata</taxon>
        <taxon>Vertebrata</taxon>
        <taxon>Euteleostomi</taxon>
        <taxon>Mammalia</taxon>
        <taxon>Eutheria</taxon>
        <taxon>Euarchontoglires</taxon>
        <taxon>Glires</taxon>
        <taxon>Rodentia</taxon>
        <taxon>Myomorpha</taxon>
        <taxon>Muroidea</taxon>
        <taxon>Muridae</taxon>
        <taxon>Murinae</taxon>
        <taxon>Mus</taxon>
        <taxon>Mus</taxon>
    </lineage>
</organism>
<reference key="1">
    <citation type="journal article" date="2009" name="PLoS Biol.">
        <title>Lineage-specific biology revealed by a finished genome assembly of the mouse.</title>
        <authorList>
            <person name="Church D.M."/>
            <person name="Goodstadt L."/>
            <person name="Hillier L.W."/>
            <person name="Zody M.C."/>
            <person name="Goldstein S."/>
            <person name="She X."/>
            <person name="Bult C.J."/>
            <person name="Agarwala R."/>
            <person name="Cherry J.L."/>
            <person name="DiCuccio M."/>
            <person name="Hlavina W."/>
            <person name="Kapustin Y."/>
            <person name="Meric P."/>
            <person name="Maglott D."/>
            <person name="Birtle Z."/>
            <person name="Marques A.C."/>
            <person name="Graves T."/>
            <person name="Zhou S."/>
            <person name="Teague B."/>
            <person name="Potamousis K."/>
            <person name="Churas C."/>
            <person name="Place M."/>
            <person name="Herschleb J."/>
            <person name="Runnheim R."/>
            <person name="Forrest D."/>
            <person name="Amos-Landgraf J."/>
            <person name="Schwartz D.C."/>
            <person name="Cheng Z."/>
            <person name="Lindblad-Toh K."/>
            <person name="Eichler E.E."/>
            <person name="Ponting C.P."/>
        </authorList>
    </citation>
    <scope>NUCLEOTIDE SEQUENCE [LARGE SCALE GENOMIC DNA]</scope>
    <source>
        <strain>C57BL/6J</strain>
    </source>
</reference>
<reference key="2">
    <citation type="journal article" date="2004" name="Genome Res.">
        <title>The status, quality, and expansion of the NIH full-length cDNA project: the Mammalian Gene Collection (MGC).</title>
        <authorList>
            <consortium name="The MGC Project Team"/>
        </authorList>
    </citation>
    <scope>NUCLEOTIDE SEQUENCE [LARGE SCALE MRNA] (ISOFORM 2)</scope>
    <source>
        <tissue>Brain</tissue>
    </source>
</reference>
<reference evidence="5" key="3">
    <citation type="journal article" date="2010" name="Cell">
        <title>A tissue-specific atlas of mouse protein phosphorylation and expression.</title>
        <authorList>
            <person name="Huttlin E.L."/>
            <person name="Jedrychowski M.P."/>
            <person name="Elias J.E."/>
            <person name="Goswami T."/>
            <person name="Rad R."/>
            <person name="Beausoleil S.A."/>
            <person name="Villen J."/>
            <person name="Haas W."/>
            <person name="Sowa M.E."/>
            <person name="Gygi S.P."/>
        </authorList>
    </citation>
    <scope>IDENTIFICATION BY MASS SPECTROMETRY [LARGE SCALE ANALYSIS]</scope>
</reference>